<sequence length="192" mass="19984">MKFATFLDQQIAEHAETLAVTGAAVREPFQRLVQACVDSLAAGGKILFFGNGGSAADAQHLAAELVIRYRYNRKALAALALTTDTSTLTACANDFSYEEIFSRQIEALGRPGDVAIGITTSGSSPNVLTALAVARDMGLVAAGFAGRDGGKMVGLADPLLIVPSNVTARIQEMHILIGHALCDQVEAVAAPA</sequence>
<organism>
    <name type="scientific">Paramagnetospirillum magneticum (strain ATCC 700264 / AMB-1)</name>
    <name type="common">Magnetospirillum magneticum</name>
    <dbReference type="NCBI Taxonomy" id="342108"/>
    <lineage>
        <taxon>Bacteria</taxon>
        <taxon>Pseudomonadati</taxon>
        <taxon>Pseudomonadota</taxon>
        <taxon>Alphaproteobacteria</taxon>
        <taxon>Rhodospirillales</taxon>
        <taxon>Magnetospirillaceae</taxon>
        <taxon>Paramagnetospirillum</taxon>
    </lineage>
</organism>
<name>GMHA_PARM1</name>
<proteinExistence type="inferred from homology"/>
<feature type="chain" id="PRO_1000009077" description="Phosphoheptose isomerase">
    <location>
        <begin position="1"/>
        <end position="192"/>
    </location>
</feature>
<feature type="domain" description="SIS" evidence="1">
    <location>
        <begin position="36"/>
        <end position="192"/>
    </location>
</feature>
<feature type="binding site" evidence="1">
    <location>
        <begin position="51"/>
        <end position="53"/>
    </location>
    <ligand>
        <name>substrate</name>
    </ligand>
</feature>
<feature type="binding site" evidence="1">
    <location>
        <position position="60"/>
    </location>
    <ligand>
        <name>Zn(2+)</name>
        <dbReference type="ChEBI" id="CHEBI:29105"/>
    </ligand>
</feature>
<feature type="binding site" evidence="1">
    <location>
        <position position="64"/>
    </location>
    <ligand>
        <name>substrate</name>
    </ligand>
</feature>
<feature type="binding site" evidence="1">
    <location>
        <position position="64"/>
    </location>
    <ligand>
        <name>Zn(2+)</name>
        <dbReference type="ChEBI" id="CHEBI:29105"/>
    </ligand>
</feature>
<feature type="binding site" evidence="1">
    <location>
        <begin position="93"/>
        <end position="94"/>
    </location>
    <ligand>
        <name>substrate</name>
    </ligand>
</feature>
<feature type="binding site" evidence="1">
    <location>
        <begin position="119"/>
        <end position="121"/>
    </location>
    <ligand>
        <name>substrate</name>
    </ligand>
</feature>
<feature type="binding site" evidence="1">
    <location>
        <position position="124"/>
    </location>
    <ligand>
        <name>substrate</name>
    </ligand>
</feature>
<feature type="binding site" evidence="1">
    <location>
        <position position="171"/>
    </location>
    <ligand>
        <name>substrate</name>
    </ligand>
</feature>
<feature type="binding site" evidence="1">
    <location>
        <position position="171"/>
    </location>
    <ligand>
        <name>Zn(2+)</name>
        <dbReference type="ChEBI" id="CHEBI:29105"/>
    </ligand>
</feature>
<feature type="binding site" evidence="1">
    <location>
        <position position="179"/>
    </location>
    <ligand>
        <name>Zn(2+)</name>
        <dbReference type="ChEBI" id="CHEBI:29105"/>
    </ligand>
</feature>
<dbReference type="EC" id="5.3.1.28" evidence="1"/>
<dbReference type="EMBL" id="AP007255">
    <property type="protein sequence ID" value="BAE48836.1"/>
    <property type="molecule type" value="Genomic_DNA"/>
</dbReference>
<dbReference type="RefSeq" id="WP_011382480.1">
    <property type="nucleotide sequence ID" value="NC_007626.1"/>
</dbReference>
<dbReference type="SMR" id="Q2WBD9"/>
<dbReference type="STRING" id="342108.amb0032"/>
<dbReference type="KEGG" id="mag:amb0032"/>
<dbReference type="HOGENOM" id="CLU_080999_4_0_5"/>
<dbReference type="OrthoDB" id="9810929at2"/>
<dbReference type="UniPathway" id="UPA00041">
    <property type="reaction ID" value="UER00436"/>
</dbReference>
<dbReference type="Proteomes" id="UP000007058">
    <property type="component" value="Chromosome"/>
</dbReference>
<dbReference type="GO" id="GO:0005737">
    <property type="term" value="C:cytoplasm"/>
    <property type="evidence" value="ECO:0007669"/>
    <property type="project" value="UniProtKB-SubCell"/>
</dbReference>
<dbReference type="GO" id="GO:0097367">
    <property type="term" value="F:carbohydrate derivative binding"/>
    <property type="evidence" value="ECO:0007669"/>
    <property type="project" value="InterPro"/>
</dbReference>
<dbReference type="GO" id="GO:0008968">
    <property type="term" value="F:D-sedoheptulose 7-phosphate isomerase activity"/>
    <property type="evidence" value="ECO:0007669"/>
    <property type="project" value="UniProtKB-UniRule"/>
</dbReference>
<dbReference type="GO" id="GO:0008270">
    <property type="term" value="F:zinc ion binding"/>
    <property type="evidence" value="ECO:0007669"/>
    <property type="project" value="UniProtKB-UniRule"/>
</dbReference>
<dbReference type="GO" id="GO:0005975">
    <property type="term" value="P:carbohydrate metabolic process"/>
    <property type="evidence" value="ECO:0007669"/>
    <property type="project" value="UniProtKB-UniRule"/>
</dbReference>
<dbReference type="GO" id="GO:2001061">
    <property type="term" value="P:D-glycero-D-manno-heptose 7-phosphate biosynthetic process"/>
    <property type="evidence" value="ECO:0007669"/>
    <property type="project" value="UniProtKB-UniPathway"/>
</dbReference>
<dbReference type="CDD" id="cd05006">
    <property type="entry name" value="SIS_GmhA"/>
    <property type="match status" value="1"/>
</dbReference>
<dbReference type="Gene3D" id="3.40.50.10490">
    <property type="entry name" value="Glucose-6-phosphate isomerase like protein, domain 1"/>
    <property type="match status" value="1"/>
</dbReference>
<dbReference type="HAMAP" id="MF_00067">
    <property type="entry name" value="GmhA"/>
    <property type="match status" value="1"/>
</dbReference>
<dbReference type="InterPro" id="IPR035461">
    <property type="entry name" value="GmhA/DiaA"/>
</dbReference>
<dbReference type="InterPro" id="IPR004515">
    <property type="entry name" value="Phosphoheptose_Isoase"/>
</dbReference>
<dbReference type="InterPro" id="IPR001347">
    <property type="entry name" value="SIS_dom"/>
</dbReference>
<dbReference type="InterPro" id="IPR046348">
    <property type="entry name" value="SIS_dom_sf"/>
</dbReference>
<dbReference type="InterPro" id="IPR050099">
    <property type="entry name" value="SIS_GmhA/DiaA_subfam"/>
</dbReference>
<dbReference type="PANTHER" id="PTHR30390:SF6">
    <property type="entry name" value="DNAA INITIATOR-ASSOCIATING PROTEIN DIAA"/>
    <property type="match status" value="1"/>
</dbReference>
<dbReference type="PANTHER" id="PTHR30390">
    <property type="entry name" value="SEDOHEPTULOSE 7-PHOSPHATE ISOMERASE / DNAA INITIATOR-ASSOCIATING FACTOR FOR REPLICATION INITIATION"/>
    <property type="match status" value="1"/>
</dbReference>
<dbReference type="Pfam" id="PF13580">
    <property type="entry name" value="SIS_2"/>
    <property type="match status" value="1"/>
</dbReference>
<dbReference type="SUPFAM" id="SSF53697">
    <property type="entry name" value="SIS domain"/>
    <property type="match status" value="1"/>
</dbReference>
<dbReference type="PROSITE" id="PS51464">
    <property type="entry name" value="SIS"/>
    <property type="match status" value="1"/>
</dbReference>
<evidence type="ECO:0000255" key="1">
    <source>
        <dbReference type="HAMAP-Rule" id="MF_00067"/>
    </source>
</evidence>
<comment type="function">
    <text evidence="1">Catalyzes the isomerization of sedoheptulose 7-phosphate in D-glycero-D-manno-heptose 7-phosphate.</text>
</comment>
<comment type="catalytic activity">
    <reaction evidence="1">
        <text>2 D-sedoheptulose 7-phosphate = D-glycero-alpha-D-manno-heptose 7-phosphate + D-glycero-beta-D-manno-heptose 7-phosphate</text>
        <dbReference type="Rhea" id="RHEA:27489"/>
        <dbReference type="ChEBI" id="CHEBI:57483"/>
        <dbReference type="ChEBI" id="CHEBI:60203"/>
        <dbReference type="ChEBI" id="CHEBI:60204"/>
        <dbReference type="EC" id="5.3.1.28"/>
    </reaction>
</comment>
<comment type="cofactor">
    <cofactor evidence="1">
        <name>Zn(2+)</name>
        <dbReference type="ChEBI" id="CHEBI:29105"/>
    </cofactor>
    <text evidence="1">Binds 1 zinc ion per subunit.</text>
</comment>
<comment type="pathway">
    <text evidence="1">Carbohydrate biosynthesis; D-glycero-D-manno-heptose 7-phosphate biosynthesis; D-glycero-alpha-D-manno-heptose 7-phosphate and D-glycero-beta-D-manno-heptose 7-phosphate from sedoheptulose 7-phosphate: step 1/1.</text>
</comment>
<comment type="subunit">
    <text evidence="1">Homotetramer.</text>
</comment>
<comment type="subcellular location">
    <subcellularLocation>
        <location evidence="1">Cytoplasm</location>
    </subcellularLocation>
</comment>
<comment type="miscellaneous">
    <text evidence="1">The reaction produces a racemic mixture of D-glycero-alpha-D-manno-heptose 7-phosphate and D-glycero-beta-D-manno-heptose 7-phosphate.</text>
</comment>
<comment type="similarity">
    <text evidence="1">Belongs to the SIS family. GmhA subfamily.</text>
</comment>
<gene>
    <name evidence="1" type="primary">gmhA</name>
    <name type="ordered locus">amb0032</name>
</gene>
<accession>Q2WBD9</accession>
<protein>
    <recommendedName>
        <fullName evidence="1">Phosphoheptose isomerase</fullName>
        <ecNumber evidence="1">5.3.1.28</ecNumber>
    </recommendedName>
    <alternativeName>
        <fullName evidence="1">Sedoheptulose 7-phosphate isomerase</fullName>
    </alternativeName>
</protein>
<keyword id="KW-0119">Carbohydrate metabolism</keyword>
<keyword id="KW-0963">Cytoplasm</keyword>
<keyword id="KW-0413">Isomerase</keyword>
<keyword id="KW-0479">Metal-binding</keyword>
<keyword id="KW-0862">Zinc</keyword>
<reference key="1">
    <citation type="journal article" date="2005" name="DNA Res.">
        <title>Complete genome sequence of the facultative anaerobic magnetotactic bacterium Magnetospirillum sp. strain AMB-1.</title>
        <authorList>
            <person name="Matsunaga T."/>
            <person name="Okamura Y."/>
            <person name="Fukuda Y."/>
            <person name="Wahyudi A.T."/>
            <person name="Murase Y."/>
            <person name="Takeyama H."/>
        </authorList>
    </citation>
    <scope>NUCLEOTIDE SEQUENCE [LARGE SCALE GENOMIC DNA]</scope>
    <source>
        <strain>ATCC 700264 / AMB-1</strain>
    </source>
</reference>